<organism>
    <name type="scientific">Prorocentrum micans</name>
    <name type="common">Red tide dinoflagellate</name>
    <dbReference type="NCBI Taxonomy" id="2945"/>
    <lineage>
        <taxon>Eukaryota</taxon>
        <taxon>Sar</taxon>
        <taxon>Alveolata</taxon>
        <taxon>Dinophyceae</taxon>
        <taxon>Prorocentrales</taxon>
        <taxon>Prorocentraceae</taxon>
        <taxon>Prorocentrum</taxon>
    </lineage>
</organism>
<gene>
    <name evidence="1" type="primary">psbA</name>
</gene>
<comment type="function">
    <text evidence="1">Photosystem II (PSII) is a light-driven water:plastoquinone oxidoreductase that uses light energy to abstract electrons from H(2)O, generating O(2) and a proton gradient subsequently used for ATP formation. It consists of a core antenna complex that captures photons, and an electron transfer chain that converts photonic excitation into a charge separation. The D1/D2 (PsbA/PsbD) reaction center heterodimer binds P680, the primary electron donor of PSII as well as several subsequent electron acceptors.</text>
</comment>
<comment type="catalytic activity">
    <reaction evidence="1">
        <text>2 a plastoquinone + 4 hnu + 2 H2O = 2 a plastoquinol + O2</text>
        <dbReference type="Rhea" id="RHEA:36359"/>
        <dbReference type="Rhea" id="RHEA-COMP:9561"/>
        <dbReference type="Rhea" id="RHEA-COMP:9562"/>
        <dbReference type="ChEBI" id="CHEBI:15377"/>
        <dbReference type="ChEBI" id="CHEBI:15379"/>
        <dbReference type="ChEBI" id="CHEBI:17757"/>
        <dbReference type="ChEBI" id="CHEBI:30212"/>
        <dbReference type="ChEBI" id="CHEBI:62192"/>
        <dbReference type="EC" id="1.10.3.9"/>
    </reaction>
</comment>
<comment type="cofactor">
    <text evidence="1">The D1/D2 heterodimer binds P680, chlorophylls that are the primary electron donor of PSII, and subsequent electron acceptors. It shares a non-heme iron and each subunit binds pheophytin, quinone, additional chlorophylls, carotenoids and lipids. D1 provides most of the ligands for the Mn4-Ca-O5 cluster of the oxygen-evolving complex (OEC). There is also a Cl(-1) ion associated with D1 and D2, which is required for oxygen evolution. The PSII complex binds additional chlorophylls, carotenoids and specific lipids.</text>
</comment>
<comment type="subunit">
    <text evidence="1">PSII is composed of 1 copy each of membrane proteins PsbA, PsbB, PsbC, PsbD, PsbE, PsbF, PsbH, PsbI, PsbJ, PsbK, PsbL, PsbM, PsbT, PsbX, PsbY, PsbZ, Psb30/Ycf12, at least 3 peripheral proteins of the oxygen-evolving complex and a large number of cofactors. It forms dimeric complexes.</text>
</comment>
<comment type="subcellular location">
    <subcellularLocation>
        <location evidence="1">Plastid</location>
        <location evidence="1">Chloroplast thylakoid membrane</location>
        <topology evidence="1">Multi-pass membrane protein</topology>
    </subcellularLocation>
</comment>
<comment type="PTM">
    <text evidence="1">Tyr-160 forms a radical intermediate that is referred to as redox-active TyrZ, YZ or Y-Z.</text>
</comment>
<comment type="miscellaneous">
    <text evidence="1">2 of the reaction center chlorophylls (ChlD1 and ChlD2) are entirely coordinated by water.</text>
</comment>
<comment type="miscellaneous">
    <text evidence="1">Herbicides such as atrazine, BNT, diuron or ioxynil bind in the Q(B) binding site and block subsequent electron transfer.</text>
</comment>
<comment type="similarity">
    <text evidence="1">Belongs to the reaction center PufL/M/PsbA/D family.</text>
</comment>
<sequence length="343" mass="37552">MKNSQAVTSLTWWSVVVAYIVSTNSRLYIGWFGVLLFPLIAVSTVAYVAAFILAPPVDIDGIREPVSGSLLYSNNIITGAVIPSSNAIGVHFYPVWEAISNNEWLYNGGTYQFVVLHFLAAVLAWLGREYEYSFRLGMRPWIYLAFSAPVVAASAVFVVYPIGQGSFSDGMPLGISGTFNFMLVFQAEHNILMHPFHILGVSAVFGGSLFSAMHGSLVTSSLLSETASYDSLNAGYVFGQEDETYAISAAHGYFGRLLFQYGSFNNSRSLHFFLAAWPVIGIWCTAIGVSTMAFNLNGLNFNQSLLDSSGHVVNSWADVVNRADLGMEVMHERNTHNFPLDLA</sequence>
<proteinExistence type="inferred from homology"/>
<evidence type="ECO:0000255" key="1">
    <source>
        <dbReference type="HAMAP-Rule" id="MF_01379"/>
    </source>
</evidence>
<feature type="chain" id="PRO_0000316500" description="Photosystem II protein D1" evidence="1">
    <location>
        <begin position="1"/>
        <end position="343"/>
    </location>
</feature>
<feature type="transmembrane region" description="Helical" evidence="1">
    <location>
        <begin position="28"/>
        <end position="45"/>
    </location>
</feature>
<feature type="transmembrane region" description="Helical" evidence="1">
    <location>
        <begin position="117"/>
        <end position="132"/>
    </location>
</feature>
<feature type="transmembrane region" description="Helical" evidence="1">
    <location>
        <begin position="141"/>
        <end position="155"/>
    </location>
</feature>
<feature type="transmembrane region" description="Helical" evidence="1">
    <location>
        <begin position="196"/>
        <end position="217"/>
    </location>
</feature>
<feature type="transmembrane region" description="Helical" evidence="1">
    <location>
        <begin position="273"/>
        <end position="287"/>
    </location>
</feature>
<feature type="binding site" description="axial binding residue" evidence="1">
    <location>
        <position position="117"/>
    </location>
    <ligand>
        <name>chlorophyll a</name>
        <dbReference type="ChEBI" id="CHEBI:58416"/>
        <label>ChlzD1</label>
    </ligand>
    <ligandPart>
        <name>Mg</name>
        <dbReference type="ChEBI" id="CHEBI:25107"/>
    </ligandPart>
</feature>
<feature type="binding site" evidence="1">
    <location>
        <position position="125"/>
    </location>
    <ligand>
        <name>pheophytin a</name>
        <dbReference type="ChEBI" id="CHEBI:136840"/>
        <label>D1</label>
    </ligand>
</feature>
<feature type="binding site" evidence="1">
    <location>
        <position position="169"/>
    </location>
    <ligand>
        <name>[CaMn4O5] cluster</name>
        <dbReference type="ChEBI" id="CHEBI:189552"/>
    </ligand>
</feature>
<feature type="binding site" evidence="1">
    <location>
        <position position="188"/>
    </location>
    <ligand>
        <name>[CaMn4O5] cluster</name>
        <dbReference type="ChEBI" id="CHEBI:189552"/>
    </ligand>
</feature>
<feature type="binding site" description="axial binding residue" evidence="1">
    <location>
        <position position="197"/>
    </location>
    <ligand>
        <name>chlorophyll a</name>
        <dbReference type="ChEBI" id="CHEBI:58416"/>
        <label>PD1</label>
    </ligand>
    <ligandPart>
        <name>Mg</name>
        <dbReference type="ChEBI" id="CHEBI:25107"/>
    </ligandPart>
</feature>
<feature type="binding site" evidence="1">
    <location>
        <position position="214"/>
    </location>
    <ligand>
        <name>a quinone</name>
        <dbReference type="ChEBI" id="CHEBI:132124"/>
        <label>B</label>
    </ligand>
</feature>
<feature type="binding site" evidence="1">
    <location>
        <position position="214"/>
    </location>
    <ligand>
        <name>Fe cation</name>
        <dbReference type="ChEBI" id="CHEBI:24875"/>
        <note>ligand shared with heterodimeric partner</note>
    </ligand>
</feature>
<feature type="binding site" evidence="1">
    <location>
        <begin position="263"/>
        <end position="264"/>
    </location>
    <ligand>
        <name>a quinone</name>
        <dbReference type="ChEBI" id="CHEBI:132124"/>
        <label>B</label>
    </ligand>
</feature>
<feature type="binding site" evidence="1">
    <location>
        <position position="271"/>
    </location>
    <ligand>
        <name>Fe cation</name>
        <dbReference type="ChEBI" id="CHEBI:24875"/>
        <note>ligand shared with heterodimeric partner</note>
    </ligand>
</feature>
<feature type="binding site" evidence="1">
    <location>
        <position position="331"/>
    </location>
    <ligand>
        <name>[CaMn4O5] cluster</name>
        <dbReference type="ChEBI" id="CHEBI:189552"/>
    </ligand>
</feature>
<feature type="binding site" evidence="1">
    <location>
        <position position="332"/>
    </location>
    <ligand>
        <name>[CaMn4O5] cluster</name>
        <dbReference type="ChEBI" id="CHEBI:189552"/>
    </ligand>
</feature>
<feature type="binding site" evidence="1">
    <location>
        <position position="341"/>
    </location>
    <ligand>
        <name>[CaMn4O5] cluster</name>
        <dbReference type="ChEBI" id="CHEBI:189552"/>
    </ligand>
</feature>
<feature type="binding site" evidence="1">
    <location>
        <position position="343"/>
    </location>
    <ligand>
        <name>[CaMn4O5] cluster</name>
        <dbReference type="ChEBI" id="CHEBI:189552"/>
    </ligand>
</feature>
<feature type="site" description="Tyrosine radical intermediate" evidence="1">
    <location>
        <position position="160"/>
    </location>
</feature>
<feature type="site" description="Stabilizes free radical intermediate" evidence="1">
    <location>
        <position position="189"/>
    </location>
</feature>
<geneLocation type="chloroplast"/>
<accession>Q9TM72</accession>
<dbReference type="EC" id="1.10.3.9" evidence="1"/>
<dbReference type="EMBL" id="AB025585">
    <property type="protein sequence ID" value="BAA83812.1"/>
    <property type="molecule type" value="Genomic_DNA"/>
</dbReference>
<dbReference type="SMR" id="Q9TM72"/>
<dbReference type="GO" id="GO:0009535">
    <property type="term" value="C:chloroplast thylakoid membrane"/>
    <property type="evidence" value="ECO:0007669"/>
    <property type="project" value="UniProtKB-SubCell"/>
</dbReference>
<dbReference type="GO" id="GO:0009523">
    <property type="term" value="C:photosystem II"/>
    <property type="evidence" value="ECO:0007669"/>
    <property type="project" value="UniProtKB-KW"/>
</dbReference>
<dbReference type="GO" id="GO:0016168">
    <property type="term" value="F:chlorophyll binding"/>
    <property type="evidence" value="ECO:0007669"/>
    <property type="project" value="UniProtKB-UniRule"/>
</dbReference>
<dbReference type="GO" id="GO:0045156">
    <property type="term" value="F:electron transporter, transferring electrons within the cyclic electron transport pathway of photosynthesis activity"/>
    <property type="evidence" value="ECO:0007669"/>
    <property type="project" value="InterPro"/>
</dbReference>
<dbReference type="GO" id="GO:0005506">
    <property type="term" value="F:iron ion binding"/>
    <property type="evidence" value="ECO:0007669"/>
    <property type="project" value="UniProtKB-UniRule"/>
</dbReference>
<dbReference type="GO" id="GO:0016682">
    <property type="term" value="F:oxidoreductase activity, acting on diphenols and related substances as donors, oxygen as acceptor"/>
    <property type="evidence" value="ECO:0007669"/>
    <property type="project" value="UniProtKB-UniRule"/>
</dbReference>
<dbReference type="GO" id="GO:0009772">
    <property type="term" value="P:photosynthetic electron transport in photosystem II"/>
    <property type="evidence" value="ECO:0007669"/>
    <property type="project" value="InterPro"/>
</dbReference>
<dbReference type="GO" id="GO:0009635">
    <property type="term" value="P:response to herbicide"/>
    <property type="evidence" value="ECO:0007669"/>
    <property type="project" value="UniProtKB-KW"/>
</dbReference>
<dbReference type="Gene3D" id="1.20.85.10">
    <property type="entry name" value="Photosystem II protein D1-like"/>
    <property type="match status" value="1"/>
</dbReference>
<dbReference type="HAMAP" id="MF_01379">
    <property type="entry name" value="PSII_PsbA_D1"/>
    <property type="match status" value="1"/>
</dbReference>
<dbReference type="InterPro" id="IPR055266">
    <property type="entry name" value="D1/D2"/>
</dbReference>
<dbReference type="InterPro" id="IPR036854">
    <property type="entry name" value="Photo_II_D1/D2_sf"/>
</dbReference>
<dbReference type="InterPro" id="IPR000484">
    <property type="entry name" value="Photo_RC_L/M"/>
</dbReference>
<dbReference type="InterPro" id="IPR055265">
    <property type="entry name" value="Photo_RC_L/M_CS"/>
</dbReference>
<dbReference type="InterPro" id="IPR005867">
    <property type="entry name" value="PSII_D1"/>
</dbReference>
<dbReference type="NCBIfam" id="TIGR01151">
    <property type="entry name" value="psbA"/>
    <property type="match status" value="1"/>
</dbReference>
<dbReference type="PANTHER" id="PTHR33149:SF12">
    <property type="entry name" value="PHOTOSYSTEM II D2 PROTEIN"/>
    <property type="match status" value="1"/>
</dbReference>
<dbReference type="PANTHER" id="PTHR33149">
    <property type="entry name" value="PHOTOSYSTEM II PROTEIN D1"/>
    <property type="match status" value="1"/>
</dbReference>
<dbReference type="Pfam" id="PF00124">
    <property type="entry name" value="Photo_RC"/>
    <property type="match status" value="1"/>
</dbReference>
<dbReference type="PRINTS" id="PR00256">
    <property type="entry name" value="REACTNCENTRE"/>
</dbReference>
<dbReference type="SUPFAM" id="SSF81483">
    <property type="entry name" value="Bacterial photosystem II reaction centre, L and M subunits"/>
    <property type="match status" value="1"/>
</dbReference>
<dbReference type="PROSITE" id="PS00244">
    <property type="entry name" value="REACTION_CENTER"/>
    <property type="match status" value="1"/>
</dbReference>
<keyword id="KW-0106">Calcium</keyword>
<keyword id="KW-0148">Chlorophyll</keyword>
<keyword id="KW-0150">Chloroplast</keyword>
<keyword id="KW-0157">Chromophore</keyword>
<keyword id="KW-0249">Electron transport</keyword>
<keyword id="KW-0359">Herbicide resistance</keyword>
<keyword id="KW-0408">Iron</keyword>
<keyword id="KW-0460">Magnesium</keyword>
<keyword id="KW-0464">Manganese</keyword>
<keyword id="KW-0472">Membrane</keyword>
<keyword id="KW-0479">Metal-binding</keyword>
<keyword id="KW-0560">Oxidoreductase</keyword>
<keyword id="KW-0602">Photosynthesis</keyword>
<keyword id="KW-0604">Photosystem II</keyword>
<keyword id="KW-0934">Plastid</keyword>
<keyword id="KW-0793">Thylakoid</keyword>
<keyword id="KW-0812">Transmembrane</keyword>
<keyword id="KW-1133">Transmembrane helix</keyword>
<keyword id="KW-0813">Transport</keyword>
<name>PSBA_PROMC</name>
<protein>
    <recommendedName>
        <fullName evidence="1">Photosystem II protein D1</fullName>
        <shortName evidence="1">PSII D1 protein</shortName>
        <ecNumber evidence="1">1.10.3.9</ecNumber>
    </recommendedName>
    <alternativeName>
        <fullName evidence="1">Photosystem II Q(B) protein</fullName>
    </alternativeName>
</protein>
<reference key="1">
    <citation type="journal article" date="1999" name="Phycol. Res.">
        <title>Molecular cloning and nucleotide sequence analysis of psbA from the dinoflagellates: origin of the dinoflagellate plastid.</title>
        <authorList>
            <person name="Takishita K."/>
            <person name="Uchida A."/>
        </authorList>
    </citation>
    <scope>NUCLEOTIDE SEQUENCE [GENOMIC DNA]</scope>
    <source>
        <strain>NIES-12</strain>
    </source>
</reference>